<protein>
    <recommendedName>
        <fullName>Glutathione S-transferase 2</fullName>
        <ecNumber>2.5.1.18</ecNumber>
    </recommendedName>
    <alternativeName>
        <fullName>GST class-sigma</fullName>
    </alternativeName>
</protein>
<reference key="1">
    <citation type="journal article" date="1995" name="Insect Biochem. Mol. Biol.">
        <title>Glutathione S-transferases from larval Manduca sexta midgut: sequence of two cDNAs and enzyme induction.</title>
        <authorList>
            <person name="Snyder M.J."/>
            <person name="Walding J.K."/>
            <person name="Feyereisen R."/>
        </authorList>
    </citation>
    <scope>NUCLEOTIDE SEQUENCE [MRNA]</scope>
    <source>
        <tissue>Midgut</tissue>
    </source>
</reference>
<gene>
    <name type="primary">GST2</name>
</gene>
<accession>P46429</accession>
<sequence>MPKVVFHYFGAKGWARPTMLLAYGGQEFEDHRVEYEQWPEFKPNTPFGQMPVLEIDGKKYAQSLAISRYLGRKYGLAGNDIEEDFEIDQIVDFVNDIRASAASVEYEQDAANKEVKHEENMKNKYPFQLNKLSEIITKNNGFLALGRLTWADFVFVGMFDYLKKMLRMPDLEEQYPIFKKPIETVLSNPKLKAYLDSAPKKEF</sequence>
<feature type="chain" id="PRO_0000185918" description="Glutathione S-transferase 2">
    <location>
        <begin position="1"/>
        <end position="203"/>
    </location>
</feature>
<feature type="domain" description="GST N-terminal">
    <location>
        <begin position="1"/>
        <end position="78"/>
    </location>
</feature>
<feature type="domain" description="GST C-terminal">
    <location>
        <begin position="80"/>
        <end position="203"/>
    </location>
</feature>
<feature type="binding site" evidence="2">
    <location>
        <position position="8"/>
    </location>
    <ligand>
        <name>glutathione</name>
        <dbReference type="ChEBI" id="CHEBI:57925"/>
    </ligand>
</feature>
<feature type="binding site" evidence="2">
    <location>
        <position position="38"/>
    </location>
    <ligand>
        <name>glutathione</name>
        <dbReference type="ChEBI" id="CHEBI:57925"/>
    </ligand>
</feature>
<feature type="binding site" evidence="3">
    <location>
        <position position="42"/>
    </location>
    <ligand>
        <name>glutathione</name>
        <dbReference type="ChEBI" id="CHEBI:57925"/>
    </ligand>
</feature>
<feature type="binding site" evidence="2">
    <location>
        <begin position="48"/>
        <end position="50"/>
    </location>
    <ligand>
        <name>glutathione</name>
        <dbReference type="ChEBI" id="CHEBI:57925"/>
    </ligand>
</feature>
<feature type="binding site" evidence="2">
    <location>
        <begin position="62"/>
        <end position="63"/>
    </location>
    <ligand>
        <name>glutathione</name>
        <dbReference type="ChEBI" id="CHEBI:57925"/>
    </ligand>
</feature>
<comment type="function">
    <text>Conjugation of reduced glutathione to a wide number of exogenous and endogenous hydrophobic electrophiles.</text>
</comment>
<comment type="catalytic activity">
    <reaction>
        <text>RX + glutathione = an S-substituted glutathione + a halide anion + H(+)</text>
        <dbReference type="Rhea" id="RHEA:16437"/>
        <dbReference type="ChEBI" id="CHEBI:15378"/>
        <dbReference type="ChEBI" id="CHEBI:16042"/>
        <dbReference type="ChEBI" id="CHEBI:17792"/>
        <dbReference type="ChEBI" id="CHEBI:57925"/>
        <dbReference type="ChEBI" id="CHEBI:90779"/>
        <dbReference type="EC" id="2.5.1.18"/>
    </reaction>
</comment>
<comment type="subunit">
    <text evidence="1">Homodimer.</text>
</comment>
<comment type="induction">
    <text>By dietary chemicals.</text>
</comment>
<comment type="similarity">
    <text evidence="4">Belongs to the GST superfamily. Sigma family.</text>
</comment>
<proteinExistence type="evidence at transcript level"/>
<dbReference type="EC" id="2.5.1.18"/>
<dbReference type="EMBL" id="L32092">
    <property type="protein sequence ID" value="AAA92881.1"/>
    <property type="molecule type" value="mRNA"/>
</dbReference>
<dbReference type="SMR" id="P46429"/>
<dbReference type="OrthoDB" id="414243at2759"/>
<dbReference type="GO" id="GO:0004364">
    <property type="term" value="F:glutathione transferase activity"/>
    <property type="evidence" value="ECO:0007669"/>
    <property type="project" value="UniProtKB-EC"/>
</dbReference>
<dbReference type="GO" id="GO:0006749">
    <property type="term" value="P:glutathione metabolic process"/>
    <property type="evidence" value="ECO:0007669"/>
    <property type="project" value="TreeGrafter"/>
</dbReference>
<dbReference type="CDD" id="cd03192">
    <property type="entry name" value="GST_C_Sigma_like"/>
    <property type="match status" value="1"/>
</dbReference>
<dbReference type="CDD" id="cd03039">
    <property type="entry name" value="GST_N_Sigma_like"/>
    <property type="match status" value="1"/>
</dbReference>
<dbReference type="FunFam" id="1.20.1050.10:FF:000030">
    <property type="entry name" value="Glutathione S-transferase S1"/>
    <property type="match status" value="1"/>
</dbReference>
<dbReference type="Gene3D" id="1.20.1050.10">
    <property type="match status" value="1"/>
</dbReference>
<dbReference type="Gene3D" id="3.40.30.10">
    <property type="entry name" value="Glutaredoxin"/>
    <property type="match status" value="1"/>
</dbReference>
<dbReference type="InterPro" id="IPR010987">
    <property type="entry name" value="Glutathione-S-Trfase_C-like"/>
</dbReference>
<dbReference type="InterPro" id="IPR036282">
    <property type="entry name" value="Glutathione-S-Trfase_C_sf"/>
</dbReference>
<dbReference type="InterPro" id="IPR004045">
    <property type="entry name" value="Glutathione_S-Trfase_N"/>
</dbReference>
<dbReference type="InterPro" id="IPR004046">
    <property type="entry name" value="GST_C"/>
</dbReference>
<dbReference type="InterPro" id="IPR050213">
    <property type="entry name" value="GST_superfamily"/>
</dbReference>
<dbReference type="InterPro" id="IPR036249">
    <property type="entry name" value="Thioredoxin-like_sf"/>
</dbReference>
<dbReference type="PANTHER" id="PTHR11571">
    <property type="entry name" value="GLUTATHIONE S-TRANSFERASE"/>
    <property type="match status" value="1"/>
</dbReference>
<dbReference type="PANTHER" id="PTHR11571:SF224">
    <property type="entry name" value="HEMATOPOIETIC PROSTAGLANDIN D SYNTHASE"/>
    <property type="match status" value="1"/>
</dbReference>
<dbReference type="Pfam" id="PF14497">
    <property type="entry name" value="GST_C_3"/>
    <property type="match status" value="1"/>
</dbReference>
<dbReference type="Pfam" id="PF02798">
    <property type="entry name" value="GST_N"/>
    <property type="match status" value="1"/>
</dbReference>
<dbReference type="SFLD" id="SFLDG01205">
    <property type="entry name" value="AMPS.1"/>
    <property type="match status" value="1"/>
</dbReference>
<dbReference type="SFLD" id="SFLDG00363">
    <property type="entry name" value="AMPS_(cytGST):_Alpha-__Mu-__Pi"/>
    <property type="match status" value="1"/>
</dbReference>
<dbReference type="SUPFAM" id="SSF47616">
    <property type="entry name" value="GST C-terminal domain-like"/>
    <property type="match status" value="1"/>
</dbReference>
<dbReference type="SUPFAM" id="SSF52833">
    <property type="entry name" value="Thioredoxin-like"/>
    <property type="match status" value="1"/>
</dbReference>
<dbReference type="PROSITE" id="PS50405">
    <property type="entry name" value="GST_CTER"/>
    <property type="match status" value="1"/>
</dbReference>
<dbReference type="PROSITE" id="PS50404">
    <property type="entry name" value="GST_NTER"/>
    <property type="match status" value="1"/>
</dbReference>
<evidence type="ECO:0000250" key="1"/>
<evidence type="ECO:0000250" key="2">
    <source>
        <dbReference type="UniProtKB" id="O60760"/>
    </source>
</evidence>
<evidence type="ECO:0000250" key="3">
    <source>
        <dbReference type="UniProtKB" id="P46088"/>
    </source>
</evidence>
<evidence type="ECO:0000305" key="4"/>
<name>GST2_MANSE</name>
<keyword id="KW-0808">Transferase</keyword>
<organism>
    <name type="scientific">Manduca sexta</name>
    <name type="common">Tobacco hawkmoth</name>
    <name type="synonym">Tobacco hornworm</name>
    <dbReference type="NCBI Taxonomy" id="7130"/>
    <lineage>
        <taxon>Eukaryota</taxon>
        <taxon>Metazoa</taxon>
        <taxon>Ecdysozoa</taxon>
        <taxon>Arthropoda</taxon>
        <taxon>Hexapoda</taxon>
        <taxon>Insecta</taxon>
        <taxon>Pterygota</taxon>
        <taxon>Neoptera</taxon>
        <taxon>Endopterygota</taxon>
        <taxon>Lepidoptera</taxon>
        <taxon>Glossata</taxon>
        <taxon>Ditrysia</taxon>
        <taxon>Bombycoidea</taxon>
        <taxon>Sphingidae</taxon>
        <taxon>Sphinginae</taxon>
        <taxon>Sphingini</taxon>
        <taxon>Manduca</taxon>
    </lineage>
</organism>